<protein>
    <recommendedName>
        <fullName evidence="1">UPF0280 protein Msm_0088</fullName>
    </recommendedName>
</protein>
<evidence type="ECO:0000255" key="1">
    <source>
        <dbReference type="HAMAP-Rule" id="MF_01079"/>
    </source>
</evidence>
<comment type="similarity">
    <text evidence="1">Belongs to the UPF0280 family.</text>
</comment>
<accession>A5UJB5</accession>
<reference key="1">
    <citation type="journal article" date="2007" name="Proc. Natl. Acad. Sci. U.S.A.">
        <title>Genomic and metabolic adaptations of Methanobrevibacter smithii to the human gut.</title>
        <authorList>
            <person name="Samuel B.S."/>
            <person name="Hansen E.E."/>
            <person name="Manchester J.K."/>
            <person name="Coutinho P.M."/>
            <person name="Henrissat B."/>
            <person name="Fulton R."/>
            <person name="Latreille P."/>
            <person name="Kim K."/>
            <person name="Wilson R.K."/>
            <person name="Gordon J.I."/>
        </authorList>
    </citation>
    <scope>NUCLEOTIDE SEQUENCE [LARGE SCALE GENOMIC DNA]</scope>
    <source>
        <strain>ATCC 35061 / DSM 861 / OCM 144 / PS</strain>
    </source>
</reference>
<feature type="chain" id="PRO_0000366699" description="UPF0280 protein Msm_0088">
    <location>
        <begin position="1"/>
        <end position="238"/>
    </location>
</feature>
<gene>
    <name type="ordered locus">Msm_0088</name>
</gene>
<sequence>MEFQHIDLNQTHIRLTTDLKNNNLEKYILNLRKELEHYITKNKDFQLSLEPVNHDEEDLSEIIKRMYTASSYCDVGPMACVAGCISEMSLDYLISKKSEYSIIENGGDIAIVNNKKAVCGIYSNNPILGNKIGFELKARKTPLGICTSSGKIGHSISFGYADSVTVLSKKASVADGLATKIANEAVGQNSEYKVSNALEASENYKDLFEGVLIISQDNVGSIGKLPKIVETEEFNVKM</sequence>
<dbReference type="EMBL" id="CP000678">
    <property type="protein sequence ID" value="ABQ86293.1"/>
    <property type="molecule type" value="Genomic_DNA"/>
</dbReference>
<dbReference type="RefSeq" id="WP_011953674.1">
    <property type="nucleotide sequence ID" value="NZ_CP117965.1"/>
</dbReference>
<dbReference type="SMR" id="A5UJB5"/>
<dbReference type="STRING" id="420247.Msm_0088"/>
<dbReference type="EnsemblBacteria" id="ABQ86293">
    <property type="protein sequence ID" value="ABQ86293"/>
    <property type="gene ID" value="Msm_0088"/>
</dbReference>
<dbReference type="KEGG" id="msi:Msm_0088"/>
<dbReference type="PATRIC" id="fig|420247.28.peg.91"/>
<dbReference type="eggNOG" id="arCOG04376">
    <property type="taxonomic scope" value="Archaea"/>
</dbReference>
<dbReference type="HOGENOM" id="CLU_074757_0_0_2"/>
<dbReference type="BioCyc" id="MSMI420247:GHWZ-88-MONOMER"/>
<dbReference type="Proteomes" id="UP000001992">
    <property type="component" value="Chromosome"/>
</dbReference>
<dbReference type="Gene3D" id="3.10.520.10">
    <property type="entry name" value="ApbE-like domains"/>
    <property type="match status" value="1"/>
</dbReference>
<dbReference type="HAMAP" id="MF_01079">
    <property type="entry name" value="UPF0280"/>
    <property type="match status" value="1"/>
</dbReference>
<dbReference type="InterPro" id="IPR003374">
    <property type="entry name" value="ApbE-like_sf"/>
</dbReference>
<dbReference type="InterPro" id="IPR037456">
    <property type="entry name" value="MA1715-like"/>
</dbReference>
<dbReference type="InterPro" id="IPR007183">
    <property type="entry name" value="UPF0280"/>
</dbReference>
<dbReference type="PIRSF" id="PIRSF006421">
    <property type="entry name" value="UCP006421"/>
    <property type="match status" value="1"/>
</dbReference>
<dbReference type="SUPFAM" id="SSF143631">
    <property type="entry name" value="ApbE-like"/>
    <property type="match status" value="1"/>
</dbReference>
<proteinExistence type="inferred from homology"/>
<organism>
    <name type="scientific">Methanobrevibacter smithii (strain ATCC 35061 / DSM 861 / OCM 144 / PS)</name>
    <dbReference type="NCBI Taxonomy" id="420247"/>
    <lineage>
        <taxon>Archaea</taxon>
        <taxon>Methanobacteriati</taxon>
        <taxon>Methanobacteriota</taxon>
        <taxon>Methanomada group</taxon>
        <taxon>Methanobacteria</taxon>
        <taxon>Methanobacteriales</taxon>
        <taxon>Methanobacteriaceae</taxon>
        <taxon>Methanobrevibacter</taxon>
    </lineage>
</organism>
<name>Y088_METS3</name>